<name>Y343_CLOP1</name>
<dbReference type="EMBL" id="CP000246">
    <property type="protein sequence ID" value="ABG84634.1"/>
    <property type="molecule type" value="Genomic_DNA"/>
</dbReference>
<dbReference type="SMR" id="Q0TU87"/>
<dbReference type="STRING" id="195103.CPF_0343"/>
<dbReference type="PaxDb" id="195103-CPF_0343"/>
<dbReference type="KEGG" id="cpf:CPF_0343"/>
<dbReference type="eggNOG" id="COG1660">
    <property type="taxonomic scope" value="Bacteria"/>
</dbReference>
<dbReference type="HOGENOM" id="CLU_059558_0_0_9"/>
<dbReference type="Proteomes" id="UP000001823">
    <property type="component" value="Chromosome"/>
</dbReference>
<dbReference type="GO" id="GO:0005524">
    <property type="term" value="F:ATP binding"/>
    <property type="evidence" value="ECO:0007669"/>
    <property type="project" value="UniProtKB-UniRule"/>
</dbReference>
<dbReference type="GO" id="GO:0005525">
    <property type="term" value="F:GTP binding"/>
    <property type="evidence" value="ECO:0007669"/>
    <property type="project" value="UniProtKB-UniRule"/>
</dbReference>
<dbReference type="Gene3D" id="3.40.50.300">
    <property type="entry name" value="P-loop containing nucleotide triphosphate hydrolases"/>
    <property type="match status" value="1"/>
</dbReference>
<dbReference type="HAMAP" id="MF_00636">
    <property type="entry name" value="RapZ_like"/>
    <property type="match status" value="1"/>
</dbReference>
<dbReference type="InterPro" id="IPR027417">
    <property type="entry name" value="P-loop_NTPase"/>
</dbReference>
<dbReference type="InterPro" id="IPR005337">
    <property type="entry name" value="RapZ-like"/>
</dbReference>
<dbReference type="InterPro" id="IPR053930">
    <property type="entry name" value="RapZ-like_N"/>
</dbReference>
<dbReference type="InterPro" id="IPR053931">
    <property type="entry name" value="RapZ_C"/>
</dbReference>
<dbReference type="NCBIfam" id="NF003828">
    <property type="entry name" value="PRK05416.1"/>
    <property type="match status" value="1"/>
</dbReference>
<dbReference type="PANTHER" id="PTHR30448">
    <property type="entry name" value="RNASE ADAPTER PROTEIN RAPZ"/>
    <property type="match status" value="1"/>
</dbReference>
<dbReference type="PANTHER" id="PTHR30448:SF0">
    <property type="entry name" value="RNASE ADAPTER PROTEIN RAPZ"/>
    <property type="match status" value="1"/>
</dbReference>
<dbReference type="Pfam" id="PF22740">
    <property type="entry name" value="PapZ_C"/>
    <property type="match status" value="1"/>
</dbReference>
<dbReference type="Pfam" id="PF03668">
    <property type="entry name" value="RapZ-like_N"/>
    <property type="match status" value="1"/>
</dbReference>
<dbReference type="PIRSF" id="PIRSF005052">
    <property type="entry name" value="P-loopkin"/>
    <property type="match status" value="1"/>
</dbReference>
<dbReference type="SUPFAM" id="SSF52540">
    <property type="entry name" value="P-loop containing nucleoside triphosphate hydrolases"/>
    <property type="match status" value="1"/>
</dbReference>
<accession>Q0TU87</accession>
<proteinExistence type="inferred from homology"/>
<sequence>MRFVIVTGLSGAGKTEATRSLEDLGYFCVDNLPPKLIPKFAEACVQSEGKIDKIALVIDIRGGIFFDDLFESIEYLKANDFNYEILFLEASDEVLVKRFKETRRSHPLSPDGRIITGISEERMRLRELKDRADNIIDTSNYPIRNLREKINLLYGDGKPVEQNLSITVLSFGFKYGIPSDSDLVFDVRFIPNPFYIPELKPFSGEDEPVKNYVLAQEETKGFLSRLSDMAEFLIPNYIKEGKRQLIISIGCTGGRHRSVAIANALYKDLLCKNFHVTLEHRDINEDINRGDRKL</sequence>
<evidence type="ECO:0000255" key="1">
    <source>
        <dbReference type="HAMAP-Rule" id="MF_00636"/>
    </source>
</evidence>
<keyword id="KW-0067">ATP-binding</keyword>
<keyword id="KW-0342">GTP-binding</keyword>
<keyword id="KW-0547">Nucleotide-binding</keyword>
<comment type="function">
    <text evidence="1">Displays ATPase and GTPase activities.</text>
</comment>
<comment type="similarity">
    <text evidence="1">Belongs to the RapZ-like family.</text>
</comment>
<organism>
    <name type="scientific">Clostridium perfringens (strain ATCC 13124 / DSM 756 / JCM 1290 / NCIMB 6125 / NCTC 8237 / Type A)</name>
    <dbReference type="NCBI Taxonomy" id="195103"/>
    <lineage>
        <taxon>Bacteria</taxon>
        <taxon>Bacillati</taxon>
        <taxon>Bacillota</taxon>
        <taxon>Clostridia</taxon>
        <taxon>Eubacteriales</taxon>
        <taxon>Clostridiaceae</taxon>
        <taxon>Clostridium</taxon>
    </lineage>
</organism>
<feature type="chain" id="PRO_0000258954" description="Nucleotide-binding protein CPF_0343">
    <location>
        <begin position="1"/>
        <end position="294"/>
    </location>
</feature>
<feature type="binding site" evidence="1">
    <location>
        <begin position="8"/>
        <end position="15"/>
    </location>
    <ligand>
        <name>ATP</name>
        <dbReference type="ChEBI" id="CHEBI:30616"/>
    </ligand>
</feature>
<feature type="binding site" evidence="1">
    <location>
        <begin position="59"/>
        <end position="62"/>
    </location>
    <ligand>
        <name>GTP</name>
        <dbReference type="ChEBI" id="CHEBI:37565"/>
    </ligand>
</feature>
<reference key="1">
    <citation type="journal article" date="2006" name="Genome Res.">
        <title>Skewed genomic variability in strains of the toxigenic bacterial pathogen, Clostridium perfringens.</title>
        <authorList>
            <person name="Myers G.S.A."/>
            <person name="Rasko D.A."/>
            <person name="Cheung J.K."/>
            <person name="Ravel J."/>
            <person name="Seshadri R."/>
            <person name="DeBoy R.T."/>
            <person name="Ren Q."/>
            <person name="Varga J."/>
            <person name="Awad M.M."/>
            <person name="Brinkac L.M."/>
            <person name="Daugherty S.C."/>
            <person name="Haft D.H."/>
            <person name="Dodson R.J."/>
            <person name="Madupu R."/>
            <person name="Nelson W.C."/>
            <person name="Rosovitz M.J."/>
            <person name="Sullivan S.A."/>
            <person name="Khouri H."/>
            <person name="Dimitrov G.I."/>
            <person name="Watkins K.L."/>
            <person name="Mulligan S."/>
            <person name="Benton J."/>
            <person name="Radune D."/>
            <person name="Fisher D.J."/>
            <person name="Atkins H.S."/>
            <person name="Hiscox T."/>
            <person name="Jost B.H."/>
            <person name="Billington S.J."/>
            <person name="Songer J.G."/>
            <person name="McClane B.A."/>
            <person name="Titball R.W."/>
            <person name="Rood J.I."/>
            <person name="Melville S.B."/>
            <person name="Paulsen I.T."/>
        </authorList>
    </citation>
    <scope>NUCLEOTIDE SEQUENCE [LARGE SCALE GENOMIC DNA]</scope>
    <source>
        <strain>ATCC 13124 / DSM 756 / JCM 1290 / NCIMB 6125 / NCTC 8237 / S 107 / Type A</strain>
    </source>
</reference>
<protein>
    <recommendedName>
        <fullName evidence="1">Nucleotide-binding protein CPF_0343</fullName>
    </recommendedName>
</protein>
<gene>
    <name type="ordered locus">CPF_0343</name>
</gene>